<evidence type="ECO:0000255" key="1">
    <source>
        <dbReference type="HAMAP-Rule" id="MF_01369"/>
    </source>
</evidence>
<evidence type="ECO:0000305" key="2"/>
<organism>
    <name type="scientific">Lactobacillus delbrueckii subsp. bulgaricus (strain ATCC BAA-365 / Lb-18)</name>
    <dbReference type="NCBI Taxonomy" id="321956"/>
    <lineage>
        <taxon>Bacteria</taxon>
        <taxon>Bacillati</taxon>
        <taxon>Bacillota</taxon>
        <taxon>Bacilli</taxon>
        <taxon>Lactobacillales</taxon>
        <taxon>Lactobacillaceae</taxon>
        <taxon>Lactobacillus</taxon>
    </lineage>
</organism>
<feature type="chain" id="PRO_1000068091" description="Large ribosomal subunit protein uL23">
    <location>
        <begin position="1"/>
        <end position="98"/>
    </location>
</feature>
<dbReference type="EMBL" id="CP000412">
    <property type="protein sequence ID" value="ABJ58009.1"/>
    <property type="molecule type" value="Genomic_DNA"/>
</dbReference>
<dbReference type="RefSeq" id="WP_003620831.1">
    <property type="nucleotide sequence ID" value="NC_008529.1"/>
</dbReference>
<dbReference type="SMR" id="Q04C13"/>
<dbReference type="KEGG" id="lbu:LBUL_0352"/>
<dbReference type="HOGENOM" id="CLU_037562_3_2_9"/>
<dbReference type="BioCyc" id="LDEL321956:LBUL_RS01645-MONOMER"/>
<dbReference type="GO" id="GO:1990904">
    <property type="term" value="C:ribonucleoprotein complex"/>
    <property type="evidence" value="ECO:0007669"/>
    <property type="project" value="UniProtKB-KW"/>
</dbReference>
<dbReference type="GO" id="GO:0005840">
    <property type="term" value="C:ribosome"/>
    <property type="evidence" value="ECO:0007669"/>
    <property type="project" value="UniProtKB-KW"/>
</dbReference>
<dbReference type="GO" id="GO:0019843">
    <property type="term" value="F:rRNA binding"/>
    <property type="evidence" value="ECO:0007669"/>
    <property type="project" value="UniProtKB-UniRule"/>
</dbReference>
<dbReference type="GO" id="GO:0003735">
    <property type="term" value="F:structural constituent of ribosome"/>
    <property type="evidence" value="ECO:0007669"/>
    <property type="project" value="InterPro"/>
</dbReference>
<dbReference type="GO" id="GO:0006412">
    <property type="term" value="P:translation"/>
    <property type="evidence" value="ECO:0007669"/>
    <property type="project" value="UniProtKB-UniRule"/>
</dbReference>
<dbReference type="FunFam" id="3.30.70.330:FF:000001">
    <property type="entry name" value="50S ribosomal protein L23"/>
    <property type="match status" value="1"/>
</dbReference>
<dbReference type="Gene3D" id="3.30.70.330">
    <property type="match status" value="1"/>
</dbReference>
<dbReference type="HAMAP" id="MF_01369_B">
    <property type="entry name" value="Ribosomal_uL23_B"/>
    <property type="match status" value="1"/>
</dbReference>
<dbReference type="InterPro" id="IPR012677">
    <property type="entry name" value="Nucleotide-bd_a/b_plait_sf"/>
</dbReference>
<dbReference type="InterPro" id="IPR013025">
    <property type="entry name" value="Ribosomal_uL23-like"/>
</dbReference>
<dbReference type="InterPro" id="IPR012678">
    <property type="entry name" value="Ribosomal_uL23/eL15/eS24_sf"/>
</dbReference>
<dbReference type="NCBIfam" id="NF004363">
    <property type="entry name" value="PRK05738.2-4"/>
    <property type="match status" value="1"/>
</dbReference>
<dbReference type="PANTHER" id="PTHR11620">
    <property type="entry name" value="60S RIBOSOMAL PROTEIN L23A"/>
    <property type="match status" value="1"/>
</dbReference>
<dbReference type="Pfam" id="PF00276">
    <property type="entry name" value="Ribosomal_L23"/>
    <property type="match status" value="1"/>
</dbReference>
<dbReference type="SUPFAM" id="SSF54189">
    <property type="entry name" value="Ribosomal proteins S24e, L23 and L15e"/>
    <property type="match status" value="1"/>
</dbReference>
<proteinExistence type="inferred from homology"/>
<accession>Q04C13</accession>
<sequence>MDARDIILRPVITEKSADLMDSKKYTFDVALTATKLQVRDAIEEIFDVKVKSVNIMNVRGKEKRVGRYTGKIARRRKAIVALTEDSNDIKIFKDENNE</sequence>
<gene>
    <name evidence="1" type="primary">rplW</name>
    <name type="ordered locus">LBUL_0352</name>
</gene>
<comment type="function">
    <text evidence="1">One of the early assembly proteins it binds 23S rRNA. One of the proteins that surrounds the polypeptide exit tunnel on the outside of the ribosome. Forms the main docking site for trigger factor binding to the ribosome.</text>
</comment>
<comment type="subunit">
    <text evidence="1">Part of the 50S ribosomal subunit. Contacts protein L29, and trigger factor when it is bound to the ribosome.</text>
</comment>
<comment type="similarity">
    <text evidence="1">Belongs to the universal ribosomal protein uL23 family.</text>
</comment>
<protein>
    <recommendedName>
        <fullName evidence="1">Large ribosomal subunit protein uL23</fullName>
    </recommendedName>
    <alternativeName>
        <fullName evidence="2">50S ribosomal protein L23</fullName>
    </alternativeName>
</protein>
<name>RL23_LACDB</name>
<keyword id="KW-0687">Ribonucleoprotein</keyword>
<keyword id="KW-0689">Ribosomal protein</keyword>
<keyword id="KW-0694">RNA-binding</keyword>
<keyword id="KW-0699">rRNA-binding</keyword>
<reference key="1">
    <citation type="journal article" date="2006" name="Proc. Natl. Acad. Sci. U.S.A.">
        <title>Comparative genomics of the lactic acid bacteria.</title>
        <authorList>
            <person name="Makarova K.S."/>
            <person name="Slesarev A."/>
            <person name="Wolf Y.I."/>
            <person name="Sorokin A."/>
            <person name="Mirkin B."/>
            <person name="Koonin E.V."/>
            <person name="Pavlov A."/>
            <person name="Pavlova N."/>
            <person name="Karamychev V."/>
            <person name="Polouchine N."/>
            <person name="Shakhova V."/>
            <person name="Grigoriev I."/>
            <person name="Lou Y."/>
            <person name="Rohksar D."/>
            <person name="Lucas S."/>
            <person name="Huang K."/>
            <person name="Goodstein D.M."/>
            <person name="Hawkins T."/>
            <person name="Plengvidhya V."/>
            <person name="Welker D."/>
            <person name="Hughes J."/>
            <person name="Goh Y."/>
            <person name="Benson A."/>
            <person name="Baldwin K."/>
            <person name="Lee J.-H."/>
            <person name="Diaz-Muniz I."/>
            <person name="Dosti B."/>
            <person name="Smeianov V."/>
            <person name="Wechter W."/>
            <person name="Barabote R."/>
            <person name="Lorca G."/>
            <person name="Altermann E."/>
            <person name="Barrangou R."/>
            <person name="Ganesan B."/>
            <person name="Xie Y."/>
            <person name="Rawsthorne H."/>
            <person name="Tamir D."/>
            <person name="Parker C."/>
            <person name="Breidt F."/>
            <person name="Broadbent J.R."/>
            <person name="Hutkins R."/>
            <person name="O'Sullivan D."/>
            <person name="Steele J."/>
            <person name="Unlu G."/>
            <person name="Saier M.H. Jr."/>
            <person name="Klaenhammer T."/>
            <person name="Richardson P."/>
            <person name="Kozyavkin S."/>
            <person name="Weimer B.C."/>
            <person name="Mills D.A."/>
        </authorList>
    </citation>
    <scope>NUCLEOTIDE SEQUENCE [LARGE SCALE GENOMIC DNA]</scope>
    <source>
        <strain>ATCC BAA-365 / Lb-18</strain>
    </source>
</reference>